<feature type="chain" id="PRO_0000257237" description="UDP-N-acetylmuramoylalanine--D-glutamate ligase">
    <location>
        <begin position="1"/>
        <end position="438"/>
    </location>
</feature>
<feature type="binding site" evidence="1">
    <location>
        <begin position="112"/>
        <end position="118"/>
    </location>
    <ligand>
        <name>ATP</name>
        <dbReference type="ChEBI" id="CHEBI:30616"/>
    </ligand>
</feature>
<comment type="function">
    <text evidence="1">Cell wall formation. Catalyzes the addition of glutamate to the nucleotide precursor UDP-N-acetylmuramoyl-L-alanine (UMA).</text>
</comment>
<comment type="catalytic activity">
    <reaction evidence="1">
        <text>UDP-N-acetyl-alpha-D-muramoyl-L-alanine + D-glutamate + ATP = UDP-N-acetyl-alpha-D-muramoyl-L-alanyl-D-glutamate + ADP + phosphate + H(+)</text>
        <dbReference type="Rhea" id="RHEA:16429"/>
        <dbReference type="ChEBI" id="CHEBI:15378"/>
        <dbReference type="ChEBI" id="CHEBI:29986"/>
        <dbReference type="ChEBI" id="CHEBI:30616"/>
        <dbReference type="ChEBI" id="CHEBI:43474"/>
        <dbReference type="ChEBI" id="CHEBI:83898"/>
        <dbReference type="ChEBI" id="CHEBI:83900"/>
        <dbReference type="ChEBI" id="CHEBI:456216"/>
        <dbReference type="EC" id="6.3.2.9"/>
    </reaction>
</comment>
<comment type="pathway">
    <text evidence="1">Cell wall biogenesis; peptidoglycan biosynthesis.</text>
</comment>
<comment type="subcellular location">
    <subcellularLocation>
        <location evidence="1">Cytoplasm</location>
    </subcellularLocation>
</comment>
<comment type="similarity">
    <text evidence="1">Belongs to the MurCDEF family.</text>
</comment>
<accession>Q32K04</accession>
<dbReference type="EC" id="6.3.2.9" evidence="1"/>
<dbReference type="EMBL" id="CP000034">
    <property type="protein sequence ID" value="ABB60353.1"/>
    <property type="molecule type" value="Genomic_DNA"/>
</dbReference>
<dbReference type="RefSeq" id="WP_000796482.1">
    <property type="nucleotide sequence ID" value="NC_007606.1"/>
</dbReference>
<dbReference type="RefSeq" id="YP_401842.1">
    <property type="nucleotide sequence ID" value="NC_007606.1"/>
</dbReference>
<dbReference type="SMR" id="Q32K04"/>
<dbReference type="STRING" id="300267.SDY_0118"/>
<dbReference type="EnsemblBacteria" id="ABB60353">
    <property type="protein sequence ID" value="ABB60353"/>
    <property type="gene ID" value="SDY_0118"/>
</dbReference>
<dbReference type="KEGG" id="sdy:SDY_0118"/>
<dbReference type="PATRIC" id="fig|300267.13.peg.137"/>
<dbReference type="HOGENOM" id="CLU_032540_1_0_6"/>
<dbReference type="UniPathway" id="UPA00219"/>
<dbReference type="Proteomes" id="UP000002716">
    <property type="component" value="Chromosome"/>
</dbReference>
<dbReference type="GO" id="GO:0005737">
    <property type="term" value="C:cytoplasm"/>
    <property type="evidence" value="ECO:0007669"/>
    <property type="project" value="UniProtKB-SubCell"/>
</dbReference>
<dbReference type="GO" id="GO:0005524">
    <property type="term" value="F:ATP binding"/>
    <property type="evidence" value="ECO:0007669"/>
    <property type="project" value="UniProtKB-UniRule"/>
</dbReference>
<dbReference type="GO" id="GO:0008764">
    <property type="term" value="F:UDP-N-acetylmuramoylalanine-D-glutamate ligase activity"/>
    <property type="evidence" value="ECO:0007669"/>
    <property type="project" value="UniProtKB-UniRule"/>
</dbReference>
<dbReference type="GO" id="GO:0051301">
    <property type="term" value="P:cell division"/>
    <property type="evidence" value="ECO:0007669"/>
    <property type="project" value="UniProtKB-KW"/>
</dbReference>
<dbReference type="GO" id="GO:0071555">
    <property type="term" value="P:cell wall organization"/>
    <property type="evidence" value="ECO:0007669"/>
    <property type="project" value="UniProtKB-KW"/>
</dbReference>
<dbReference type="GO" id="GO:0009252">
    <property type="term" value="P:peptidoglycan biosynthetic process"/>
    <property type="evidence" value="ECO:0007669"/>
    <property type="project" value="UniProtKB-UniRule"/>
</dbReference>
<dbReference type="GO" id="GO:0008360">
    <property type="term" value="P:regulation of cell shape"/>
    <property type="evidence" value="ECO:0007669"/>
    <property type="project" value="UniProtKB-KW"/>
</dbReference>
<dbReference type="FunFam" id="3.40.1190.10:FF:000002">
    <property type="entry name" value="UDP-N-acetylmuramoylalanine--D-glutamate ligase"/>
    <property type="match status" value="1"/>
</dbReference>
<dbReference type="FunFam" id="3.40.50.720:FF:000126">
    <property type="entry name" value="UDP-N-acetylmuramoylalanine--D-glutamate ligase"/>
    <property type="match status" value="1"/>
</dbReference>
<dbReference type="FunFam" id="3.90.190.20:FF:000003">
    <property type="entry name" value="UDP-N-acetylmuramoylalanine--D-glutamate ligase"/>
    <property type="match status" value="1"/>
</dbReference>
<dbReference type="Gene3D" id="3.90.190.20">
    <property type="entry name" value="Mur ligase, C-terminal domain"/>
    <property type="match status" value="1"/>
</dbReference>
<dbReference type="Gene3D" id="3.40.1190.10">
    <property type="entry name" value="Mur-like, catalytic domain"/>
    <property type="match status" value="1"/>
</dbReference>
<dbReference type="Gene3D" id="3.40.50.720">
    <property type="entry name" value="NAD(P)-binding Rossmann-like Domain"/>
    <property type="match status" value="1"/>
</dbReference>
<dbReference type="HAMAP" id="MF_00639">
    <property type="entry name" value="MurD"/>
    <property type="match status" value="1"/>
</dbReference>
<dbReference type="InterPro" id="IPR036565">
    <property type="entry name" value="Mur-like_cat_sf"/>
</dbReference>
<dbReference type="InterPro" id="IPR004101">
    <property type="entry name" value="Mur_ligase_C"/>
</dbReference>
<dbReference type="InterPro" id="IPR036615">
    <property type="entry name" value="Mur_ligase_C_dom_sf"/>
</dbReference>
<dbReference type="InterPro" id="IPR013221">
    <property type="entry name" value="Mur_ligase_cen"/>
</dbReference>
<dbReference type="InterPro" id="IPR005762">
    <property type="entry name" value="MurD"/>
</dbReference>
<dbReference type="NCBIfam" id="TIGR01087">
    <property type="entry name" value="murD"/>
    <property type="match status" value="1"/>
</dbReference>
<dbReference type="PANTHER" id="PTHR43692">
    <property type="entry name" value="UDP-N-ACETYLMURAMOYLALANINE--D-GLUTAMATE LIGASE"/>
    <property type="match status" value="1"/>
</dbReference>
<dbReference type="PANTHER" id="PTHR43692:SF1">
    <property type="entry name" value="UDP-N-ACETYLMURAMOYLALANINE--D-GLUTAMATE LIGASE"/>
    <property type="match status" value="1"/>
</dbReference>
<dbReference type="Pfam" id="PF02875">
    <property type="entry name" value="Mur_ligase_C"/>
    <property type="match status" value="1"/>
</dbReference>
<dbReference type="Pfam" id="PF08245">
    <property type="entry name" value="Mur_ligase_M"/>
    <property type="match status" value="1"/>
</dbReference>
<dbReference type="Pfam" id="PF21799">
    <property type="entry name" value="MurD-like_N"/>
    <property type="match status" value="1"/>
</dbReference>
<dbReference type="SUPFAM" id="SSF51984">
    <property type="entry name" value="MurCD N-terminal domain"/>
    <property type="match status" value="1"/>
</dbReference>
<dbReference type="SUPFAM" id="SSF53623">
    <property type="entry name" value="MurD-like peptide ligases, catalytic domain"/>
    <property type="match status" value="1"/>
</dbReference>
<dbReference type="SUPFAM" id="SSF53244">
    <property type="entry name" value="MurD-like peptide ligases, peptide-binding domain"/>
    <property type="match status" value="1"/>
</dbReference>
<keyword id="KW-0067">ATP-binding</keyword>
<keyword id="KW-0131">Cell cycle</keyword>
<keyword id="KW-0132">Cell division</keyword>
<keyword id="KW-0133">Cell shape</keyword>
<keyword id="KW-0961">Cell wall biogenesis/degradation</keyword>
<keyword id="KW-0963">Cytoplasm</keyword>
<keyword id="KW-0436">Ligase</keyword>
<keyword id="KW-0547">Nucleotide-binding</keyword>
<keyword id="KW-0573">Peptidoglycan synthesis</keyword>
<keyword id="KW-1185">Reference proteome</keyword>
<organism>
    <name type="scientific">Shigella dysenteriae serotype 1 (strain Sd197)</name>
    <dbReference type="NCBI Taxonomy" id="300267"/>
    <lineage>
        <taxon>Bacteria</taxon>
        <taxon>Pseudomonadati</taxon>
        <taxon>Pseudomonadota</taxon>
        <taxon>Gammaproteobacteria</taxon>
        <taxon>Enterobacterales</taxon>
        <taxon>Enterobacteriaceae</taxon>
        <taxon>Shigella</taxon>
    </lineage>
</organism>
<name>MURD_SHIDS</name>
<evidence type="ECO:0000255" key="1">
    <source>
        <dbReference type="HAMAP-Rule" id="MF_00639"/>
    </source>
</evidence>
<proteinExistence type="inferred from homology"/>
<protein>
    <recommendedName>
        <fullName evidence="1">UDP-N-acetylmuramoylalanine--D-glutamate ligase</fullName>
        <ecNumber evidence="1">6.3.2.9</ecNumber>
    </recommendedName>
    <alternativeName>
        <fullName evidence="1">D-glutamic acid-adding enzyme</fullName>
    </alternativeName>
    <alternativeName>
        <fullName evidence="1">UDP-N-acetylmuramoyl-L-alanyl-D-glutamate synthetase</fullName>
    </alternativeName>
</protein>
<gene>
    <name evidence="1" type="primary">murD</name>
    <name type="ordered locus">SDY_0118</name>
</gene>
<sequence>MADYQGKNVVIIGLGLTGLSCVDFFLARGVTPRVMDTRMTPPGLDKLPEAVERHTGSLNDEWLMAADLIVASPGIALAHPSLSAAADAGIEIVGDIELFCREAQAPIVAITGSNGKSTVTTLVGEMAKAAGVNVGVGGNIGLPALMLLDDECELYVLELSSFQLETTSSLQAVAATILNVTEDHMDRYPFGLQQYRAAKLRIYENAKVCVVNADDALTMPIRGADERCVSFGVNMGDYHLNHQQGETWLRVKGEKVLNVKEMKLSGQHNYTNALAALALADAAGLPRASSLKALTTFTGLPHRFEVVLEHNGVRWINDSKATNVGSTEAALNGLHVDGTLHLLLGGDGKSADFSPLARYLNGDNVRLYCFGRDGVQLAALRPEVAEKTETMEQAMRLLAPRVQPGDMVLLSPACASLDQFKNFEQRGNEFARLAKELG</sequence>
<reference key="1">
    <citation type="journal article" date="2005" name="Nucleic Acids Res.">
        <title>Genome dynamics and diversity of Shigella species, the etiologic agents of bacillary dysentery.</title>
        <authorList>
            <person name="Yang F."/>
            <person name="Yang J."/>
            <person name="Zhang X."/>
            <person name="Chen L."/>
            <person name="Jiang Y."/>
            <person name="Yan Y."/>
            <person name="Tang X."/>
            <person name="Wang J."/>
            <person name="Xiong Z."/>
            <person name="Dong J."/>
            <person name="Xue Y."/>
            <person name="Zhu Y."/>
            <person name="Xu X."/>
            <person name="Sun L."/>
            <person name="Chen S."/>
            <person name="Nie H."/>
            <person name="Peng J."/>
            <person name="Xu J."/>
            <person name="Wang Y."/>
            <person name="Yuan Z."/>
            <person name="Wen Y."/>
            <person name="Yao Z."/>
            <person name="Shen Y."/>
            <person name="Qiang B."/>
            <person name="Hou Y."/>
            <person name="Yu J."/>
            <person name="Jin Q."/>
        </authorList>
    </citation>
    <scope>NUCLEOTIDE SEQUENCE [LARGE SCALE GENOMIC DNA]</scope>
    <source>
        <strain>Sd197</strain>
    </source>
</reference>